<name>EFTS_SINMW</name>
<accession>A6U8K3</accession>
<feature type="chain" id="PRO_1000006185" description="Elongation factor Ts">
    <location>
        <begin position="1"/>
        <end position="307"/>
    </location>
</feature>
<feature type="region of interest" description="Involved in Mg(2+) ion dislocation from EF-Tu" evidence="1">
    <location>
        <begin position="79"/>
        <end position="82"/>
    </location>
</feature>
<protein>
    <recommendedName>
        <fullName evidence="1">Elongation factor Ts</fullName>
        <shortName evidence="1">EF-Ts</shortName>
    </recommendedName>
</protein>
<organism>
    <name type="scientific">Sinorhizobium medicae (strain WSM419)</name>
    <name type="common">Ensifer medicae</name>
    <dbReference type="NCBI Taxonomy" id="366394"/>
    <lineage>
        <taxon>Bacteria</taxon>
        <taxon>Pseudomonadati</taxon>
        <taxon>Pseudomonadota</taxon>
        <taxon>Alphaproteobacteria</taxon>
        <taxon>Hyphomicrobiales</taxon>
        <taxon>Rhizobiaceae</taxon>
        <taxon>Sinorhizobium/Ensifer group</taxon>
        <taxon>Sinorhizobium</taxon>
    </lineage>
</organism>
<sequence>MTVTAAMVKELREKTGAGMMDCKKALAETNGDMEAAIDWLRAKGIAKADKKSGRTAAEGLIGIASAGAKAVVVEINSETDFVARNDAFQELVRGVANVALGTDGSVAAVSKATYPATGKSVEDTIKDAIATIGENMTLRRSAMLEVEDGVVATYVHNAAGEGIGKLGVLVALKSSGDKEALNAIGRQVAMHVAATNPLAVRSSEIDPAVAERERNVFIEQSRASGKPDNIIEKMVDGRMRKFFEEVALLSQAFVMNPDQTVEAAIKEAEKSVGAPIEVAGIARLLLGEGVEKEESDFAAEVAAAAKG</sequence>
<evidence type="ECO:0000255" key="1">
    <source>
        <dbReference type="HAMAP-Rule" id="MF_00050"/>
    </source>
</evidence>
<proteinExistence type="inferred from homology"/>
<gene>
    <name evidence="1" type="primary">tsf</name>
    <name type="ordered locus">Smed_1132</name>
</gene>
<dbReference type="EMBL" id="CP000738">
    <property type="protein sequence ID" value="ABR59983.1"/>
    <property type="molecule type" value="Genomic_DNA"/>
</dbReference>
<dbReference type="RefSeq" id="WP_011975302.1">
    <property type="nucleotide sequence ID" value="NC_009636.1"/>
</dbReference>
<dbReference type="RefSeq" id="YP_001326818.1">
    <property type="nucleotide sequence ID" value="NC_009636.1"/>
</dbReference>
<dbReference type="SMR" id="A6U8K3"/>
<dbReference type="STRING" id="366394.Smed_1132"/>
<dbReference type="GeneID" id="61612088"/>
<dbReference type="KEGG" id="smd:Smed_1132"/>
<dbReference type="PATRIC" id="fig|366394.8.peg.4257"/>
<dbReference type="eggNOG" id="COG0264">
    <property type="taxonomic scope" value="Bacteria"/>
</dbReference>
<dbReference type="HOGENOM" id="CLU_047155_2_0_5"/>
<dbReference type="OrthoDB" id="9808348at2"/>
<dbReference type="Proteomes" id="UP000001108">
    <property type="component" value="Chromosome"/>
</dbReference>
<dbReference type="GO" id="GO:0005737">
    <property type="term" value="C:cytoplasm"/>
    <property type="evidence" value="ECO:0007669"/>
    <property type="project" value="UniProtKB-SubCell"/>
</dbReference>
<dbReference type="GO" id="GO:0003746">
    <property type="term" value="F:translation elongation factor activity"/>
    <property type="evidence" value="ECO:0007669"/>
    <property type="project" value="UniProtKB-UniRule"/>
</dbReference>
<dbReference type="CDD" id="cd14275">
    <property type="entry name" value="UBA_EF-Ts"/>
    <property type="match status" value="1"/>
</dbReference>
<dbReference type="FunFam" id="1.10.286.20:FF:000001">
    <property type="entry name" value="Elongation factor Ts"/>
    <property type="match status" value="1"/>
</dbReference>
<dbReference type="FunFam" id="1.10.8.10:FF:000001">
    <property type="entry name" value="Elongation factor Ts"/>
    <property type="match status" value="1"/>
</dbReference>
<dbReference type="Gene3D" id="1.10.286.20">
    <property type="match status" value="1"/>
</dbReference>
<dbReference type="Gene3D" id="1.10.8.10">
    <property type="entry name" value="DNA helicase RuvA subunit, C-terminal domain"/>
    <property type="match status" value="1"/>
</dbReference>
<dbReference type="Gene3D" id="3.30.479.20">
    <property type="entry name" value="Elongation factor Ts, dimerisation domain"/>
    <property type="match status" value="2"/>
</dbReference>
<dbReference type="HAMAP" id="MF_00050">
    <property type="entry name" value="EF_Ts"/>
    <property type="match status" value="1"/>
</dbReference>
<dbReference type="InterPro" id="IPR036402">
    <property type="entry name" value="EF-Ts_dimer_sf"/>
</dbReference>
<dbReference type="InterPro" id="IPR001816">
    <property type="entry name" value="Transl_elong_EFTs/EF1B"/>
</dbReference>
<dbReference type="InterPro" id="IPR014039">
    <property type="entry name" value="Transl_elong_EFTs/EF1B_dimer"/>
</dbReference>
<dbReference type="InterPro" id="IPR018101">
    <property type="entry name" value="Transl_elong_Ts_CS"/>
</dbReference>
<dbReference type="InterPro" id="IPR009060">
    <property type="entry name" value="UBA-like_sf"/>
</dbReference>
<dbReference type="NCBIfam" id="TIGR00116">
    <property type="entry name" value="tsf"/>
    <property type="match status" value="1"/>
</dbReference>
<dbReference type="PANTHER" id="PTHR11741">
    <property type="entry name" value="ELONGATION FACTOR TS"/>
    <property type="match status" value="1"/>
</dbReference>
<dbReference type="PANTHER" id="PTHR11741:SF0">
    <property type="entry name" value="ELONGATION FACTOR TS, MITOCHONDRIAL"/>
    <property type="match status" value="1"/>
</dbReference>
<dbReference type="Pfam" id="PF00889">
    <property type="entry name" value="EF_TS"/>
    <property type="match status" value="1"/>
</dbReference>
<dbReference type="SUPFAM" id="SSF54713">
    <property type="entry name" value="Elongation factor Ts (EF-Ts), dimerisation domain"/>
    <property type="match status" value="2"/>
</dbReference>
<dbReference type="SUPFAM" id="SSF46934">
    <property type="entry name" value="UBA-like"/>
    <property type="match status" value="1"/>
</dbReference>
<dbReference type="PROSITE" id="PS01126">
    <property type="entry name" value="EF_TS_1"/>
    <property type="match status" value="1"/>
</dbReference>
<dbReference type="PROSITE" id="PS01127">
    <property type="entry name" value="EF_TS_2"/>
    <property type="match status" value="1"/>
</dbReference>
<reference key="1">
    <citation type="submission" date="2007-06" db="EMBL/GenBank/DDBJ databases">
        <title>Complete sequence of Sinorhizobium medicae WSM419 chromosome.</title>
        <authorList>
            <consortium name="US DOE Joint Genome Institute"/>
            <person name="Copeland A."/>
            <person name="Lucas S."/>
            <person name="Lapidus A."/>
            <person name="Barry K."/>
            <person name="Glavina del Rio T."/>
            <person name="Dalin E."/>
            <person name="Tice H."/>
            <person name="Pitluck S."/>
            <person name="Chain P."/>
            <person name="Malfatti S."/>
            <person name="Shin M."/>
            <person name="Vergez L."/>
            <person name="Schmutz J."/>
            <person name="Larimer F."/>
            <person name="Land M."/>
            <person name="Hauser L."/>
            <person name="Kyrpides N."/>
            <person name="Mikhailova N."/>
            <person name="Reeve W.G."/>
            <person name="Richardson P."/>
        </authorList>
    </citation>
    <scope>NUCLEOTIDE SEQUENCE [LARGE SCALE GENOMIC DNA]</scope>
    <source>
        <strain>WSM419</strain>
    </source>
</reference>
<comment type="function">
    <text evidence="1">Associates with the EF-Tu.GDP complex and induces the exchange of GDP to GTP. It remains bound to the aminoacyl-tRNA.EF-Tu.GTP complex up to the GTP hydrolysis stage on the ribosome.</text>
</comment>
<comment type="subcellular location">
    <subcellularLocation>
        <location evidence="1">Cytoplasm</location>
    </subcellularLocation>
</comment>
<comment type="similarity">
    <text evidence="1">Belongs to the EF-Ts family.</text>
</comment>
<keyword id="KW-0963">Cytoplasm</keyword>
<keyword id="KW-0251">Elongation factor</keyword>
<keyword id="KW-0648">Protein biosynthesis</keyword>